<sequence length="512" mass="59439">MQGNVIHVDKLYKMMYTDNYETIKKYLEYTVIDKTENYSTSANLIPFIPLHQAIEARNIDIIKSIITVDNVNQPGHDDTYPIHIICKEPNMLAISYMLRSINQCSVFNTLVKIKDMFNYRNVEIAKIILTNRYKNIQDIDLKYIDKKSKDDIIEITKLLFSYGADINMVDRHGNSPLHYATENPDQRLTRLLLSKGANPNILNKTNKSPLYYSIESDNPDITMLLIDKFIFNNTDPILSHAIKHYRKPILHALIENGASINARDKYGNTPLHYAVSYCKDIDVIKLLLERGVDVNAKSYIRNLTPLHSSYLKSPRVLKLLLQYGADINSLDSYSLTPLTSVVLQYLCIECGRIVVSHICCLKRIKPDIENSLGFIDNIDAITSNKRLNQIRLKCEDELNRMASIKITNTYSFDVFVLCDNITLLCKLVNNSIIDDILINSFNIYKGIILKNIYRSRKRLYLIENTLYVLNNTFKPNYMWNRLPVELQNYIMEYIDDASLKVMHEYEKHKLKY</sequence>
<feature type="chain" id="PRO_0000067124" description="Putative ankyrin repeat protein FPV233">
    <location>
        <begin position="1"/>
        <end position="512"/>
    </location>
</feature>
<feature type="repeat" description="ANK 1">
    <location>
        <begin position="45"/>
        <end position="73"/>
    </location>
</feature>
<feature type="repeat" description="ANK 2">
    <location>
        <begin position="77"/>
        <end position="106"/>
    </location>
</feature>
<feature type="repeat" description="ANK 3">
    <location>
        <begin position="136"/>
        <end position="168"/>
    </location>
</feature>
<feature type="repeat" description="ANK 4">
    <location>
        <begin position="172"/>
        <end position="201"/>
    </location>
</feature>
<feature type="repeat" description="ANK 5">
    <location>
        <begin position="205"/>
        <end position="236"/>
    </location>
</feature>
<feature type="repeat" description="ANK 6">
    <location>
        <begin position="238"/>
        <end position="262"/>
    </location>
</feature>
<feature type="repeat" description="ANK 7">
    <location>
        <begin position="266"/>
        <end position="296"/>
    </location>
</feature>
<feature type="repeat" description="ANK 8">
    <location>
        <begin position="301"/>
        <end position="329"/>
    </location>
</feature>
<gene>
    <name type="ordered locus">FPV233</name>
</gene>
<organismHost>
    <name type="scientific">Vertebrata</name>
    <dbReference type="NCBI Taxonomy" id="7742"/>
</organismHost>
<protein>
    <recommendedName>
        <fullName>Putative ankyrin repeat protein FPV233</fullName>
    </recommendedName>
</protein>
<reference key="1">
    <citation type="journal article" date="2000" name="J. Virol.">
        <title>The genome of fowlpox virus.</title>
        <authorList>
            <person name="Afonso C.L."/>
            <person name="Tulman E.R."/>
            <person name="Lu Z."/>
            <person name="Zsak L."/>
            <person name="Kutish G.F."/>
            <person name="Rock D.L."/>
        </authorList>
    </citation>
    <scope>NUCLEOTIDE SEQUENCE [LARGE SCALE GENOMIC DNA]</scope>
</reference>
<keyword id="KW-0040">ANK repeat</keyword>
<keyword id="KW-1185">Reference proteome</keyword>
<keyword id="KW-0677">Repeat</keyword>
<dbReference type="EMBL" id="AF198100">
    <property type="protein sequence ID" value="AAF44577.1"/>
    <property type="molecule type" value="Genomic_DNA"/>
</dbReference>
<dbReference type="RefSeq" id="NP_039196.1">
    <property type="nucleotide sequence ID" value="NC_002188.1"/>
</dbReference>
<dbReference type="SMR" id="Q9J502"/>
<dbReference type="GeneID" id="1486805"/>
<dbReference type="KEGG" id="vg:1486805"/>
<dbReference type="Proteomes" id="UP000008597">
    <property type="component" value="Segment"/>
</dbReference>
<dbReference type="Gene3D" id="1.25.40.20">
    <property type="entry name" value="Ankyrin repeat-containing domain"/>
    <property type="match status" value="2"/>
</dbReference>
<dbReference type="InterPro" id="IPR002110">
    <property type="entry name" value="Ankyrin_rpt"/>
</dbReference>
<dbReference type="InterPro" id="IPR036770">
    <property type="entry name" value="Ankyrin_rpt-contain_sf"/>
</dbReference>
<dbReference type="InterPro" id="IPR018272">
    <property type="entry name" value="PRANC_domain"/>
</dbReference>
<dbReference type="PANTHER" id="PTHR24198">
    <property type="entry name" value="ANKYRIN REPEAT AND PROTEIN KINASE DOMAIN-CONTAINING PROTEIN"/>
    <property type="match status" value="1"/>
</dbReference>
<dbReference type="PANTHER" id="PTHR24198:SF165">
    <property type="entry name" value="ANKYRIN REPEAT-CONTAINING PROTEIN-RELATED"/>
    <property type="match status" value="1"/>
</dbReference>
<dbReference type="Pfam" id="PF00023">
    <property type="entry name" value="Ank"/>
    <property type="match status" value="1"/>
</dbReference>
<dbReference type="Pfam" id="PF12796">
    <property type="entry name" value="Ank_2"/>
    <property type="match status" value="2"/>
</dbReference>
<dbReference type="Pfam" id="PF09372">
    <property type="entry name" value="PRANC"/>
    <property type="match status" value="1"/>
</dbReference>
<dbReference type="PRINTS" id="PR01415">
    <property type="entry name" value="ANKYRIN"/>
</dbReference>
<dbReference type="SMART" id="SM00248">
    <property type="entry name" value="ANK"/>
    <property type="match status" value="6"/>
</dbReference>
<dbReference type="SUPFAM" id="SSF48403">
    <property type="entry name" value="Ankyrin repeat"/>
    <property type="match status" value="1"/>
</dbReference>
<dbReference type="PROSITE" id="PS50297">
    <property type="entry name" value="ANK_REP_REGION"/>
    <property type="match status" value="1"/>
</dbReference>
<dbReference type="PROSITE" id="PS50088">
    <property type="entry name" value="ANK_REPEAT"/>
    <property type="match status" value="2"/>
</dbReference>
<accession>Q9J502</accession>
<organism>
    <name type="scientific">Fowlpox virus (strain NVSL)</name>
    <name type="common">FPV</name>
    <dbReference type="NCBI Taxonomy" id="928301"/>
    <lineage>
        <taxon>Viruses</taxon>
        <taxon>Varidnaviria</taxon>
        <taxon>Bamfordvirae</taxon>
        <taxon>Nucleocytoviricota</taxon>
        <taxon>Pokkesviricetes</taxon>
        <taxon>Chitovirales</taxon>
        <taxon>Poxviridae</taxon>
        <taxon>Chordopoxvirinae</taxon>
        <taxon>Avipoxvirus</taxon>
        <taxon>Fowlpox virus</taxon>
    </lineage>
</organism>
<name>V233_FOWPN</name>
<proteinExistence type="predicted"/>